<feature type="chain" id="PRO_1000018952" description="Bifunctional purine biosynthesis protein PurH">
    <location>
        <begin position="1"/>
        <end position="529"/>
    </location>
</feature>
<feature type="domain" description="MGS-like" evidence="2">
    <location>
        <begin position="1"/>
        <end position="148"/>
    </location>
</feature>
<protein>
    <recommendedName>
        <fullName evidence="1">Bifunctional purine biosynthesis protein PurH</fullName>
    </recommendedName>
    <domain>
        <recommendedName>
            <fullName evidence="1">Phosphoribosylaminoimidazolecarboxamide formyltransferase</fullName>
            <ecNumber evidence="1">2.1.2.3</ecNumber>
        </recommendedName>
        <alternativeName>
            <fullName evidence="1">AICAR transformylase</fullName>
        </alternativeName>
    </domain>
    <domain>
        <recommendedName>
            <fullName evidence="1">IMP cyclohydrolase</fullName>
            <ecNumber evidence="1">3.5.4.10</ecNumber>
        </recommendedName>
        <alternativeName>
            <fullName evidence="1">ATIC</fullName>
        </alternativeName>
        <alternativeName>
            <fullName evidence="1">IMP synthase</fullName>
        </alternativeName>
        <alternativeName>
            <fullName evidence="1">Inosinicase</fullName>
        </alternativeName>
    </domain>
</protein>
<organism>
    <name type="scientific">Shewanella frigidimarina (strain NCIMB 400)</name>
    <dbReference type="NCBI Taxonomy" id="318167"/>
    <lineage>
        <taxon>Bacteria</taxon>
        <taxon>Pseudomonadati</taxon>
        <taxon>Pseudomonadota</taxon>
        <taxon>Gammaproteobacteria</taxon>
        <taxon>Alteromonadales</taxon>
        <taxon>Shewanellaceae</taxon>
        <taxon>Shewanella</taxon>
    </lineage>
</organism>
<dbReference type="EC" id="2.1.2.3" evidence="1"/>
<dbReference type="EC" id="3.5.4.10" evidence="1"/>
<dbReference type="EMBL" id="CP000447">
    <property type="protein sequence ID" value="ABI70355.1"/>
    <property type="molecule type" value="Genomic_DNA"/>
</dbReference>
<dbReference type="RefSeq" id="WP_011635982.1">
    <property type="nucleotide sequence ID" value="NC_008345.1"/>
</dbReference>
<dbReference type="SMR" id="Q088G0"/>
<dbReference type="STRING" id="318167.Sfri_0493"/>
<dbReference type="KEGG" id="sfr:Sfri_0493"/>
<dbReference type="eggNOG" id="COG0138">
    <property type="taxonomic scope" value="Bacteria"/>
</dbReference>
<dbReference type="HOGENOM" id="CLU_016316_5_2_6"/>
<dbReference type="OrthoDB" id="9802065at2"/>
<dbReference type="UniPathway" id="UPA00074">
    <property type="reaction ID" value="UER00133"/>
</dbReference>
<dbReference type="UniPathway" id="UPA00074">
    <property type="reaction ID" value="UER00135"/>
</dbReference>
<dbReference type="Proteomes" id="UP000000684">
    <property type="component" value="Chromosome"/>
</dbReference>
<dbReference type="GO" id="GO:0005829">
    <property type="term" value="C:cytosol"/>
    <property type="evidence" value="ECO:0007669"/>
    <property type="project" value="TreeGrafter"/>
</dbReference>
<dbReference type="GO" id="GO:0003937">
    <property type="term" value="F:IMP cyclohydrolase activity"/>
    <property type="evidence" value="ECO:0007669"/>
    <property type="project" value="UniProtKB-UniRule"/>
</dbReference>
<dbReference type="GO" id="GO:0004643">
    <property type="term" value="F:phosphoribosylaminoimidazolecarboxamide formyltransferase activity"/>
    <property type="evidence" value="ECO:0007669"/>
    <property type="project" value="UniProtKB-UniRule"/>
</dbReference>
<dbReference type="GO" id="GO:0006189">
    <property type="term" value="P:'de novo' IMP biosynthetic process"/>
    <property type="evidence" value="ECO:0007669"/>
    <property type="project" value="UniProtKB-UniRule"/>
</dbReference>
<dbReference type="CDD" id="cd01421">
    <property type="entry name" value="IMPCH"/>
    <property type="match status" value="1"/>
</dbReference>
<dbReference type="FunFam" id="3.40.140.20:FF:000001">
    <property type="entry name" value="Bifunctional purine biosynthesis protein PurH"/>
    <property type="match status" value="1"/>
</dbReference>
<dbReference type="FunFam" id="3.40.140.20:FF:000002">
    <property type="entry name" value="Bifunctional purine biosynthesis protein PurH"/>
    <property type="match status" value="1"/>
</dbReference>
<dbReference type="FunFam" id="3.40.50.1380:FF:000001">
    <property type="entry name" value="Bifunctional purine biosynthesis protein PurH"/>
    <property type="match status" value="1"/>
</dbReference>
<dbReference type="Gene3D" id="3.40.140.20">
    <property type="match status" value="2"/>
</dbReference>
<dbReference type="Gene3D" id="3.40.50.1380">
    <property type="entry name" value="Methylglyoxal synthase-like domain"/>
    <property type="match status" value="1"/>
</dbReference>
<dbReference type="HAMAP" id="MF_00139">
    <property type="entry name" value="PurH"/>
    <property type="match status" value="1"/>
</dbReference>
<dbReference type="InterPro" id="IPR024051">
    <property type="entry name" value="AICAR_Tfase_dup_dom_sf"/>
</dbReference>
<dbReference type="InterPro" id="IPR016193">
    <property type="entry name" value="Cytidine_deaminase-like"/>
</dbReference>
<dbReference type="InterPro" id="IPR011607">
    <property type="entry name" value="MGS-like_dom"/>
</dbReference>
<dbReference type="InterPro" id="IPR036914">
    <property type="entry name" value="MGS-like_dom_sf"/>
</dbReference>
<dbReference type="InterPro" id="IPR002695">
    <property type="entry name" value="PurH-like"/>
</dbReference>
<dbReference type="NCBIfam" id="NF002049">
    <property type="entry name" value="PRK00881.1"/>
    <property type="match status" value="1"/>
</dbReference>
<dbReference type="NCBIfam" id="TIGR00355">
    <property type="entry name" value="purH"/>
    <property type="match status" value="1"/>
</dbReference>
<dbReference type="PANTHER" id="PTHR11692:SF0">
    <property type="entry name" value="BIFUNCTIONAL PURINE BIOSYNTHESIS PROTEIN ATIC"/>
    <property type="match status" value="1"/>
</dbReference>
<dbReference type="PANTHER" id="PTHR11692">
    <property type="entry name" value="BIFUNCTIONAL PURINE BIOSYNTHESIS PROTEIN PURH"/>
    <property type="match status" value="1"/>
</dbReference>
<dbReference type="Pfam" id="PF01808">
    <property type="entry name" value="AICARFT_IMPCHas"/>
    <property type="match status" value="1"/>
</dbReference>
<dbReference type="Pfam" id="PF02142">
    <property type="entry name" value="MGS"/>
    <property type="match status" value="1"/>
</dbReference>
<dbReference type="PIRSF" id="PIRSF000414">
    <property type="entry name" value="AICARFT_IMPCHas"/>
    <property type="match status" value="1"/>
</dbReference>
<dbReference type="SMART" id="SM00798">
    <property type="entry name" value="AICARFT_IMPCHas"/>
    <property type="match status" value="1"/>
</dbReference>
<dbReference type="SMART" id="SM00851">
    <property type="entry name" value="MGS"/>
    <property type="match status" value="1"/>
</dbReference>
<dbReference type="SUPFAM" id="SSF53927">
    <property type="entry name" value="Cytidine deaminase-like"/>
    <property type="match status" value="1"/>
</dbReference>
<dbReference type="SUPFAM" id="SSF52335">
    <property type="entry name" value="Methylglyoxal synthase-like"/>
    <property type="match status" value="1"/>
</dbReference>
<dbReference type="PROSITE" id="PS51855">
    <property type="entry name" value="MGS"/>
    <property type="match status" value="1"/>
</dbReference>
<name>PUR9_SHEFN</name>
<gene>
    <name evidence="1" type="primary">purH</name>
    <name type="ordered locus">Sfri_0493</name>
</gene>
<evidence type="ECO:0000255" key="1">
    <source>
        <dbReference type="HAMAP-Rule" id="MF_00139"/>
    </source>
</evidence>
<evidence type="ECO:0000255" key="2">
    <source>
        <dbReference type="PROSITE-ProRule" id="PRU01202"/>
    </source>
</evidence>
<sequence>MNNVRPIRRALLSVSDKTGILEFAQALHAQGVELLSTGGTAKLLADNNIPVMEVSDYTGHPEIMDGRVKTLHPKIHGGILARRGIDEIVMEQNAIKPIDLVTVNLYPFAETVAKPGCTLADAVENIDIGGPTMVRSTAKNHKDTTIVVNAKDYGRVIAEMQANNGSTTLETRFDLAIAAFEHTAAYDGMIANYFGTMVPAHSNDECHDDSTFPRTFNSQFVKKQDLRYGENSHQKAAFYVDTQIDEASVASAIQLQGKALSYNNIADTDSALECVKEFEGPACVIVKHANPCGVALGANLLEAYDRAFKTDPTSAFGGIIAFNQELDAQTAQAIVDRQFVEVIIAPKVSQAARDIIAAKANVRLLECGEWNTKTTTLDYKRVNGGLLIQDRDQGMVNLEDVKVVSKRQPTAEQLKDLMFCWKVAKFVKSNAIVYAKDGMTIGVGAGQMSRVYSAKIAGIKAADEGLVVENSVMASDAFFPFRDGIDAAAAAGISCIIQPGGSIRDEEIIAAADEHGMAMVFTGMRHFRH</sequence>
<reference key="1">
    <citation type="submission" date="2006-08" db="EMBL/GenBank/DDBJ databases">
        <title>Complete sequence of Shewanella frigidimarina NCIMB 400.</title>
        <authorList>
            <consortium name="US DOE Joint Genome Institute"/>
            <person name="Copeland A."/>
            <person name="Lucas S."/>
            <person name="Lapidus A."/>
            <person name="Barry K."/>
            <person name="Detter J.C."/>
            <person name="Glavina del Rio T."/>
            <person name="Hammon N."/>
            <person name="Israni S."/>
            <person name="Dalin E."/>
            <person name="Tice H."/>
            <person name="Pitluck S."/>
            <person name="Fredrickson J.K."/>
            <person name="Kolker E."/>
            <person name="McCuel L.A."/>
            <person name="DiChristina T."/>
            <person name="Nealson K.H."/>
            <person name="Newman D."/>
            <person name="Tiedje J.M."/>
            <person name="Zhou J."/>
            <person name="Romine M.F."/>
            <person name="Culley D.E."/>
            <person name="Serres M."/>
            <person name="Chertkov O."/>
            <person name="Brettin T."/>
            <person name="Bruce D."/>
            <person name="Han C."/>
            <person name="Tapia R."/>
            <person name="Gilna P."/>
            <person name="Schmutz J."/>
            <person name="Larimer F."/>
            <person name="Land M."/>
            <person name="Hauser L."/>
            <person name="Kyrpides N."/>
            <person name="Mikhailova N."/>
            <person name="Richardson P."/>
        </authorList>
    </citation>
    <scope>NUCLEOTIDE SEQUENCE [LARGE SCALE GENOMIC DNA]</scope>
    <source>
        <strain>NCIMB 400</strain>
    </source>
</reference>
<comment type="catalytic activity">
    <reaction evidence="1">
        <text>(6R)-10-formyltetrahydrofolate + 5-amino-1-(5-phospho-beta-D-ribosyl)imidazole-4-carboxamide = 5-formamido-1-(5-phospho-D-ribosyl)imidazole-4-carboxamide + (6S)-5,6,7,8-tetrahydrofolate</text>
        <dbReference type="Rhea" id="RHEA:22192"/>
        <dbReference type="ChEBI" id="CHEBI:57453"/>
        <dbReference type="ChEBI" id="CHEBI:58467"/>
        <dbReference type="ChEBI" id="CHEBI:58475"/>
        <dbReference type="ChEBI" id="CHEBI:195366"/>
        <dbReference type="EC" id="2.1.2.3"/>
    </reaction>
</comment>
<comment type="catalytic activity">
    <reaction evidence="1">
        <text>IMP + H2O = 5-formamido-1-(5-phospho-D-ribosyl)imidazole-4-carboxamide</text>
        <dbReference type="Rhea" id="RHEA:18445"/>
        <dbReference type="ChEBI" id="CHEBI:15377"/>
        <dbReference type="ChEBI" id="CHEBI:58053"/>
        <dbReference type="ChEBI" id="CHEBI:58467"/>
        <dbReference type="EC" id="3.5.4.10"/>
    </reaction>
</comment>
<comment type="pathway">
    <text evidence="1">Purine metabolism; IMP biosynthesis via de novo pathway; 5-formamido-1-(5-phospho-D-ribosyl)imidazole-4-carboxamide from 5-amino-1-(5-phospho-D-ribosyl)imidazole-4-carboxamide (10-formyl THF route): step 1/1.</text>
</comment>
<comment type="pathway">
    <text evidence="1">Purine metabolism; IMP biosynthesis via de novo pathway; IMP from 5-formamido-1-(5-phospho-D-ribosyl)imidazole-4-carboxamide: step 1/1.</text>
</comment>
<comment type="domain">
    <text evidence="1">The IMP cyclohydrolase activity resides in the N-terminal region.</text>
</comment>
<comment type="similarity">
    <text evidence="1">Belongs to the PurH family.</text>
</comment>
<accession>Q088G0</accession>
<proteinExistence type="inferred from homology"/>
<keyword id="KW-0378">Hydrolase</keyword>
<keyword id="KW-0511">Multifunctional enzyme</keyword>
<keyword id="KW-0658">Purine biosynthesis</keyword>
<keyword id="KW-1185">Reference proteome</keyword>
<keyword id="KW-0808">Transferase</keyword>